<proteinExistence type="inferred from homology"/>
<name>RS10_HALH5</name>
<keyword id="KW-1185">Reference proteome</keyword>
<keyword id="KW-0687">Ribonucleoprotein</keyword>
<keyword id="KW-0689">Ribosomal protein</keyword>
<dbReference type="EMBL" id="AB017508">
    <property type="protein sequence ID" value="BAA75270.1"/>
    <property type="molecule type" value="Genomic_DNA"/>
</dbReference>
<dbReference type="EMBL" id="BA000004">
    <property type="protein sequence ID" value="BAB03852.1"/>
    <property type="molecule type" value="Genomic_DNA"/>
</dbReference>
<dbReference type="PIR" id="T44382">
    <property type="entry name" value="T44382"/>
</dbReference>
<dbReference type="RefSeq" id="WP_010896316.1">
    <property type="nucleotide sequence ID" value="NC_002570.2"/>
</dbReference>
<dbReference type="SMR" id="Q9Z9L5"/>
<dbReference type="STRING" id="272558.gene:10725973"/>
<dbReference type="GeneID" id="87595674"/>
<dbReference type="KEGG" id="bha:BH0133"/>
<dbReference type="eggNOG" id="COG0051">
    <property type="taxonomic scope" value="Bacteria"/>
</dbReference>
<dbReference type="HOGENOM" id="CLU_122625_1_3_9"/>
<dbReference type="OrthoDB" id="9804464at2"/>
<dbReference type="Proteomes" id="UP000001258">
    <property type="component" value="Chromosome"/>
</dbReference>
<dbReference type="GO" id="GO:1990904">
    <property type="term" value="C:ribonucleoprotein complex"/>
    <property type="evidence" value="ECO:0007669"/>
    <property type="project" value="UniProtKB-KW"/>
</dbReference>
<dbReference type="GO" id="GO:0005840">
    <property type="term" value="C:ribosome"/>
    <property type="evidence" value="ECO:0007669"/>
    <property type="project" value="UniProtKB-KW"/>
</dbReference>
<dbReference type="GO" id="GO:0003735">
    <property type="term" value="F:structural constituent of ribosome"/>
    <property type="evidence" value="ECO:0007669"/>
    <property type="project" value="InterPro"/>
</dbReference>
<dbReference type="GO" id="GO:0000049">
    <property type="term" value="F:tRNA binding"/>
    <property type="evidence" value="ECO:0007669"/>
    <property type="project" value="UniProtKB-UniRule"/>
</dbReference>
<dbReference type="GO" id="GO:0006412">
    <property type="term" value="P:translation"/>
    <property type="evidence" value="ECO:0007669"/>
    <property type="project" value="UniProtKB-UniRule"/>
</dbReference>
<dbReference type="FunFam" id="3.30.70.600:FF:000001">
    <property type="entry name" value="30S ribosomal protein S10"/>
    <property type="match status" value="1"/>
</dbReference>
<dbReference type="Gene3D" id="3.30.70.600">
    <property type="entry name" value="Ribosomal protein S10 domain"/>
    <property type="match status" value="1"/>
</dbReference>
<dbReference type="HAMAP" id="MF_00508">
    <property type="entry name" value="Ribosomal_uS10"/>
    <property type="match status" value="1"/>
</dbReference>
<dbReference type="InterPro" id="IPR001848">
    <property type="entry name" value="Ribosomal_uS10"/>
</dbReference>
<dbReference type="InterPro" id="IPR018268">
    <property type="entry name" value="Ribosomal_uS10_CS"/>
</dbReference>
<dbReference type="InterPro" id="IPR027486">
    <property type="entry name" value="Ribosomal_uS10_dom"/>
</dbReference>
<dbReference type="InterPro" id="IPR036838">
    <property type="entry name" value="Ribosomal_uS10_dom_sf"/>
</dbReference>
<dbReference type="NCBIfam" id="NF001861">
    <property type="entry name" value="PRK00596.1"/>
    <property type="match status" value="1"/>
</dbReference>
<dbReference type="NCBIfam" id="TIGR01049">
    <property type="entry name" value="rpsJ_bact"/>
    <property type="match status" value="1"/>
</dbReference>
<dbReference type="PANTHER" id="PTHR11700">
    <property type="entry name" value="30S RIBOSOMAL PROTEIN S10 FAMILY MEMBER"/>
    <property type="match status" value="1"/>
</dbReference>
<dbReference type="Pfam" id="PF00338">
    <property type="entry name" value="Ribosomal_S10"/>
    <property type="match status" value="1"/>
</dbReference>
<dbReference type="PRINTS" id="PR00971">
    <property type="entry name" value="RIBOSOMALS10"/>
</dbReference>
<dbReference type="SMART" id="SM01403">
    <property type="entry name" value="Ribosomal_S10"/>
    <property type="match status" value="1"/>
</dbReference>
<dbReference type="SUPFAM" id="SSF54999">
    <property type="entry name" value="Ribosomal protein S10"/>
    <property type="match status" value="1"/>
</dbReference>
<dbReference type="PROSITE" id="PS00361">
    <property type="entry name" value="RIBOSOMAL_S10"/>
    <property type="match status" value="1"/>
</dbReference>
<reference key="1">
    <citation type="journal article" date="1999" name="Biosci. Biotechnol. Biochem.">
        <title>Sequence analysis of a 32-kb region including the major ribosomal protein gene clusters from alkaliphilic Bacillus sp. strain C-125.</title>
        <authorList>
            <person name="Takami H."/>
            <person name="Takaki Y."/>
            <person name="Nakasone K."/>
            <person name="Hirama C."/>
            <person name="Inoue A."/>
            <person name="Horikoshi K."/>
        </authorList>
    </citation>
    <scope>NUCLEOTIDE SEQUENCE [GENOMIC DNA]</scope>
    <source>
        <strain>ATCC BAA-125 / DSM 18197 / FERM 7344 / JCM 9153 / C-125</strain>
    </source>
</reference>
<reference key="2">
    <citation type="journal article" date="2000" name="Nucleic Acids Res.">
        <title>Complete genome sequence of the alkaliphilic bacterium Bacillus halodurans and genomic sequence comparison with Bacillus subtilis.</title>
        <authorList>
            <person name="Takami H."/>
            <person name="Nakasone K."/>
            <person name="Takaki Y."/>
            <person name="Maeno G."/>
            <person name="Sasaki R."/>
            <person name="Masui N."/>
            <person name="Fuji F."/>
            <person name="Hirama C."/>
            <person name="Nakamura Y."/>
            <person name="Ogasawara N."/>
            <person name="Kuhara S."/>
            <person name="Horikoshi K."/>
        </authorList>
    </citation>
    <scope>NUCLEOTIDE SEQUENCE [LARGE SCALE GENOMIC DNA]</scope>
    <source>
        <strain>ATCC BAA-125 / DSM 18197 / FERM 7344 / JCM 9153 / C-125</strain>
    </source>
</reference>
<feature type="chain" id="PRO_0000146492" description="Small ribosomal subunit protein uS10">
    <location>
        <begin position="1"/>
        <end position="102"/>
    </location>
</feature>
<accession>Q9Z9L5</accession>
<accession>Q9JPY7</accession>
<gene>
    <name evidence="1" type="primary">rpsJ</name>
    <name type="ordered locus">BH0133</name>
</gene>
<evidence type="ECO:0000255" key="1">
    <source>
        <dbReference type="HAMAP-Rule" id="MF_00508"/>
    </source>
</evidence>
<evidence type="ECO:0000305" key="2"/>
<sequence>MAKQKIRIRLKAYDHRVLDQSAEKIVETAKRSGANVSGPIPLPTEKSVYTILRAVHKYKDSREQFEMRTHKRLIDIVNPTPQTVDALMRLDLPSGVDIEIKL</sequence>
<organism>
    <name type="scientific">Halalkalibacterium halodurans (strain ATCC BAA-125 / DSM 18197 / FERM 7344 / JCM 9153 / C-125)</name>
    <name type="common">Bacillus halodurans</name>
    <dbReference type="NCBI Taxonomy" id="272558"/>
    <lineage>
        <taxon>Bacteria</taxon>
        <taxon>Bacillati</taxon>
        <taxon>Bacillota</taxon>
        <taxon>Bacilli</taxon>
        <taxon>Bacillales</taxon>
        <taxon>Bacillaceae</taxon>
        <taxon>Halalkalibacterium (ex Joshi et al. 2022)</taxon>
    </lineage>
</organism>
<comment type="function">
    <text evidence="1">Involved in the binding of tRNA to the ribosomes.</text>
</comment>
<comment type="subunit">
    <text evidence="1">Part of the 30S ribosomal subunit.</text>
</comment>
<comment type="similarity">
    <text evidence="1">Belongs to the universal ribosomal protein uS10 family.</text>
</comment>
<protein>
    <recommendedName>
        <fullName evidence="1">Small ribosomal subunit protein uS10</fullName>
    </recommendedName>
    <alternativeName>
        <fullName evidence="2">30S ribosomal protein S10</fullName>
    </alternativeName>
</protein>